<feature type="chain" id="PRO_0000337776" description="2-hydroxy-6-oxononadienedioate/2-hydroxy-6-oxononatrienedioate hydrolase">
    <location>
        <begin position="1"/>
        <end position="289"/>
    </location>
</feature>
<feature type="domain" description="AB hydrolase-1" evidence="1">
    <location>
        <begin position="39"/>
        <end position="275"/>
    </location>
</feature>
<feature type="active site" description="Proton acceptor" evidence="2">
    <location>
        <position position="269"/>
    </location>
</feature>
<feature type="site" description="Transition state stabilizer" evidence="2">
    <location>
        <position position="116"/>
    </location>
</feature>
<feature type="site" description="Catalytic role in ketonization of the dienol substrate (substrate destabilization)" evidence="2">
    <location>
        <position position="194"/>
    </location>
</feature>
<evidence type="ECO:0000255" key="1"/>
<evidence type="ECO:0000255" key="2">
    <source>
        <dbReference type="HAMAP-Rule" id="MF_01654"/>
    </source>
</evidence>
<name>MHPC_PARXL</name>
<organism>
    <name type="scientific">Paraburkholderia xenovorans (strain LB400)</name>
    <dbReference type="NCBI Taxonomy" id="266265"/>
    <lineage>
        <taxon>Bacteria</taxon>
        <taxon>Pseudomonadati</taxon>
        <taxon>Pseudomonadota</taxon>
        <taxon>Betaproteobacteria</taxon>
        <taxon>Burkholderiales</taxon>
        <taxon>Burkholderiaceae</taxon>
        <taxon>Paraburkholderia</taxon>
    </lineage>
</organism>
<comment type="function">
    <text evidence="2">Catalyzes the cleavage of the C5-C6 bond of 2-hydroxy-6-oxononadienedioate and 2-hydroxy-6-oxononatrienedioate, a dienol ring fission product of the bacterial meta-cleavage pathway for degradation of phenylpropionic acid.</text>
</comment>
<comment type="catalytic activity">
    <reaction evidence="2">
        <text>(2Z,4E)-2-hydroxy-6-oxonona-2,4-dienedioate + H2O = (2Z)-2-hydroxypenta-2,4-dienoate + succinate + H(+)</text>
        <dbReference type="Rhea" id="RHEA:34187"/>
        <dbReference type="ChEBI" id="CHEBI:15377"/>
        <dbReference type="ChEBI" id="CHEBI:15378"/>
        <dbReference type="ChEBI" id="CHEBI:30031"/>
        <dbReference type="ChEBI" id="CHEBI:66887"/>
        <dbReference type="ChEBI" id="CHEBI:67152"/>
        <dbReference type="EC" id="3.7.1.14"/>
    </reaction>
</comment>
<comment type="catalytic activity">
    <reaction evidence="2">
        <text>(2Z,4E,7E)-2-hydroxy-6-oxonona-2,4,7-trienedioate + H2O = (2Z)-2-hydroxypenta-2,4-dienoate + fumarate + H(+)</text>
        <dbReference type="Rhea" id="RHEA:34191"/>
        <dbReference type="ChEBI" id="CHEBI:15377"/>
        <dbReference type="ChEBI" id="CHEBI:15378"/>
        <dbReference type="ChEBI" id="CHEBI:29806"/>
        <dbReference type="ChEBI" id="CHEBI:66888"/>
        <dbReference type="ChEBI" id="CHEBI:67152"/>
        <dbReference type="EC" id="3.7.1.14"/>
    </reaction>
</comment>
<comment type="pathway">
    <text evidence="2">Aromatic compound metabolism; 3-phenylpropanoate degradation.</text>
</comment>
<comment type="subunit">
    <text evidence="2">Homodimer.</text>
</comment>
<comment type="similarity">
    <text evidence="2">Belongs to the AB hydrolase superfamily. MhpC family.</text>
</comment>
<accession>Q13QH4</accession>
<reference key="1">
    <citation type="journal article" date="2006" name="Proc. Natl. Acad. Sci. U.S.A.">
        <title>Burkholderia xenovorans LB400 harbors a multi-replicon, 9.73-Mbp genome shaped for versatility.</title>
        <authorList>
            <person name="Chain P.S.G."/>
            <person name="Denef V.J."/>
            <person name="Konstantinidis K.T."/>
            <person name="Vergez L.M."/>
            <person name="Agullo L."/>
            <person name="Reyes V.L."/>
            <person name="Hauser L."/>
            <person name="Cordova M."/>
            <person name="Gomez L."/>
            <person name="Gonzalez M."/>
            <person name="Land M."/>
            <person name="Lao V."/>
            <person name="Larimer F."/>
            <person name="LiPuma J.J."/>
            <person name="Mahenthiralingam E."/>
            <person name="Malfatti S.A."/>
            <person name="Marx C.J."/>
            <person name="Parnell J.J."/>
            <person name="Ramette A."/>
            <person name="Richardson P."/>
            <person name="Seeger M."/>
            <person name="Smith D."/>
            <person name="Spilker T."/>
            <person name="Sul W.J."/>
            <person name="Tsoi T.V."/>
            <person name="Ulrich L.E."/>
            <person name="Zhulin I.B."/>
            <person name="Tiedje J.M."/>
        </authorList>
    </citation>
    <scope>NUCLEOTIDE SEQUENCE [LARGE SCALE GENOMIC DNA]</scope>
    <source>
        <strain>LB400</strain>
    </source>
</reference>
<keyword id="KW-0058">Aromatic hydrocarbons catabolism</keyword>
<keyword id="KW-0378">Hydrolase</keyword>
<keyword id="KW-1185">Reference proteome</keyword>
<protein>
    <recommendedName>
        <fullName evidence="2">2-hydroxy-6-oxononadienedioate/2-hydroxy-6-oxononatrienedioate hydrolase</fullName>
        <ecNumber evidence="2">3.7.1.14</ecNumber>
    </recommendedName>
    <alternativeName>
        <fullName evidence="2">2-hydroxy-6-ketonona-2,4-diene-1,9-dioic acid 5,6-hydrolase</fullName>
    </alternativeName>
    <alternativeName>
        <fullName evidence="2">2-hydroxy-6-oxonona-2,4,7-triene-1,9-dioic acid 5,6-hydrolase</fullName>
    </alternativeName>
    <alternativeName>
        <fullName evidence="2">2-hydroxy-6-oxonona-2,4-diene-1,9-dioic acid 5,6-hydrolase</fullName>
    </alternativeName>
</protein>
<proteinExistence type="inferred from homology"/>
<dbReference type="EC" id="3.7.1.14" evidence="2"/>
<dbReference type="EMBL" id="CP000271">
    <property type="protein sequence ID" value="ABE33665.1"/>
    <property type="molecule type" value="Genomic_DNA"/>
</dbReference>
<dbReference type="RefSeq" id="WP_011491025.1">
    <property type="nucleotide sequence ID" value="NC_007952.1"/>
</dbReference>
<dbReference type="SMR" id="Q13QH4"/>
<dbReference type="STRING" id="266265.Bxe_B2323"/>
<dbReference type="ESTHER" id="burxl-mhpc">
    <property type="family name" value="Carbon-carbon_bond_hydrolase"/>
</dbReference>
<dbReference type="KEGG" id="bxb:DR64_4655"/>
<dbReference type="KEGG" id="bxe:Bxe_B2323"/>
<dbReference type="PATRIC" id="fig|266265.5.peg.5389"/>
<dbReference type="eggNOG" id="COG1073">
    <property type="taxonomic scope" value="Bacteria"/>
</dbReference>
<dbReference type="OrthoDB" id="9799989at2"/>
<dbReference type="UniPathway" id="UPA00714"/>
<dbReference type="Proteomes" id="UP000001817">
    <property type="component" value="Chromosome 2"/>
</dbReference>
<dbReference type="GO" id="GO:0005737">
    <property type="term" value="C:cytoplasm"/>
    <property type="evidence" value="ECO:0007669"/>
    <property type="project" value="InterPro"/>
</dbReference>
<dbReference type="GO" id="GO:0016020">
    <property type="term" value="C:membrane"/>
    <property type="evidence" value="ECO:0007669"/>
    <property type="project" value="TreeGrafter"/>
</dbReference>
<dbReference type="GO" id="GO:0052823">
    <property type="term" value="F:2-hydroxy-6-oxonona-2,4,7-trienedioate hydrolase activity"/>
    <property type="evidence" value="ECO:0007669"/>
    <property type="project" value="RHEA"/>
</dbReference>
<dbReference type="GO" id="GO:0018771">
    <property type="term" value="F:2-hydroxy-6-oxonona-2,4-dienedioate hydrolase activity"/>
    <property type="evidence" value="ECO:0007669"/>
    <property type="project" value="UniProtKB-UniRule"/>
</dbReference>
<dbReference type="GO" id="GO:0047372">
    <property type="term" value="F:monoacylglycerol lipase activity"/>
    <property type="evidence" value="ECO:0007669"/>
    <property type="project" value="TreeGrafter"/>
</dbReference>
<dbReference type="GO" id="GO:0042803">
    <property type="term" value="F:protein homodimerization activity"/>
    <property type="evidence" value="ECO:0007669"/>
    <property type="project" value="InterPro"/>
</dbReference>
<dbReference type="GO" id="GO:0019380">
    <property type="term" value="P:3-phenylpropionate catabolic process"/>
    <property type="evidence" value="ECO:0007669"/>
    <property type="project" value="UniProtKB-UniRule"/>
</dbReference>
<dbReference type="GO" id="GO:0046464">
    <property type="term" value="P:acylglycerol catabolic process"/>
    <property type="evidence" value="ECO:0007669"/>
    <property type="project" value="TreeGrafter"/>
</dbReference>
<dbReference type="Gene3D" id="3.40.50.1820">
    <property type="entry name" value="alpha/beta hydrolase"/>
    <property type="match status" value="1"/>
</dbReference>
<dbReference type="HAMAP" id="MF_01654">
    <property type="entry name" value="MhpC"/>
    <property type="match status" value="1"/>
</dbReference>
<dbReference type="InterPro" id="IPR000073">
    <property type="entry name" value="AB_hydrolase_1"/>
</dbReference>
<dbReference type="InterPro" id="IPR029058">
    <property type="entry name" value="AB_hydrolase_fold"/>
</dbReference>
<dbReference type="InterPro" id="IPR050266">
    <property type="entry name" value="AB_hydrolase_sf"/>
</dbReference>
<dbReference type="InterPro" id="IPR000639">
    <property type="entry name" value="Epox_hydrolase-like"/>
</dbReference>
<dbReference type="InterPro" id="IPR023791">
    <property type="entry name" value="MhpC_alpha/beta_hydrolase"/>
</dbReference>
<dbReference type="PANTHER" id="PTHR43798">
    <property type="entry name" value="MONOACYLGLYCEROL LIPASE"/>
    <property type="match status" value="1"/>
</dbReference>
<dbReference type="PANTHER" id="PTHR43798:SF5">
    <property type="entry name" value="MONOACYLGLYCEROL LIPASE ABHD6"/>
    <property type="match status" value="1"/>
</dbReference>
<dbReference type="Pfam" id="PF00561">
    <property type="entry name" value="Abhydrolase_1"/>
    <property type="match status" value="1"/>
</dbReference>
<dbReference type="PRINTS" id="PR00111">
    <property type="entry name" value="ABHYDROLASE"/>
</dbReference>
<dbReference type="PRINTS" id="PR00412">
    <property type="entry name" value="EPOXHYDRLASE"/>
</dbReference>
<dbReference type="SUPFAM" id="SSF53474">
    <property type="entry name" value="alpha/beta-Hydrolases"/>
    <property type="match status" value="1"/>
</dbReference>
<gene>
    <name evidence="2" type="primary">mhpC</name>
    <name type="ordered locus">Bxeno_B0697</name>
    <name type="ORF">Bxe_B2323</name>
</gene>
<sequence length="289" mass="31587">MTSNVSAITEASTSKFVRIKEGDGEVQLHYNDAGQGAETVVMLHGSGPGASGWANFNRNVEPLVAAGYRVILLDCLGWSKSDPVVCDGSRSELNARSLKGLLDALDIERVHIIGNSMGGHSAVAFALANPQRVGKLVLMGGGTGGPSQFVPMPTEGIKLLQGLYREPTIDNLKRMMNVFVFDASALTDDLMQARLDNMLARRDHLENFVKSLAANPKQFNDFGPRLGEIAAPTLVIWGRDDRFVPMDVGLRLVAGMQNAEMHIFSRCGHWAQWEHAEKFNRMVVDFLAH</sequence>